<comment type="similarity">
    <text evidence="2">Belongs to the carbon-nitrogen hydrolase superfamily. NIT1/NIT2 family.</text>
</comment>
<protein>
    <recommendedName>
        <fullName>Hydrolase C26A3.11</fullName>
        <ecNumber>3.5.-.-</ecNumber>
    </recommendedName>
</protein>
<proteinExistence type="inferred from homology"/>
<dbReference type="EC" id="3.5.-.-"/>
<dbReference type="EMBL" id="CU329670">
    <property type="protein sequence ID" value="CAA93234.1"/>
    <property type="molecule type" value="Genomic_DNA"/>
</dbReference>
<dbReference type="PIR" id="T38399">
    <property type="entry name" value="T38399"/>
</dbReference>
<dbReference type="RefSeq" id="NP_594154.1">
    <property type="nucleotide sequence ID" value="NM_001019578.2"/>
</dbReference>
<dbReference type="SMR" id="Q10166"/>
<dbReference type="BioGRID" id="279126">
    <property type="interactions" value="17"/>
</dbReference>
<dbReference type="FunCoup" id="Q10166">
    <property type="interactions" value="302"/>
</dbReference>
<dbReference type="STRING" id="284812.Q10166"/>
<dbReference type="iPTMnet" id="Q10166"/>
<dbReference type="PaxDb" id="4896-SPAC26A3.11.1"/>
<dbReference type="EnsemblFungi" id="SPAC26A3.11.1">
    <property type="protein sequence ID" value="SPAC26A3.11.1:pep"/>
    <property type="gene ID" value="SPAC26A3.11"/>
</dbReference>
<dbReference type="KEGG" id="spo:2542673"/>
<dbReference type="PomBase" id="SPAC26A3.11"/>
<dbReference type="VEuPathDB" id="FungiDB:SPAC26A3.11"/>
<dbReference type="eggNOG" id="KOG0806">
    <property type="taxonomic scope" value="Eukaryota"/>
</dbReference>
<dbReference type="HOGENOM" id="CLU_030130_1_0_1"/>
<dbReference type="InParanoid" id="Q10166"/>
<dbReference type="OMA" id="RQIPIYK"/>
<dbReference type="PhylomeDB" id="Q10166"/>
<dbReference type="Reactome" id="R-SPO-6798695">
    <property type="pathway name" value="Neutrophil degranulation"/>
</dbReference>
<dbReference type="PRO" id="PR:Q10166"/>
<dbReference type="Proteomes" id="UP000002485">
    <property type="component" value="Chromosome I"/>
</dbReference>
<dbReference type="GO" id="GO:0005739">
    <property type="term" value="C:mitochondrion"/>
    <property type="evidence" value="ECO:0007005"/>
    <property type="project" value="PomBase"/>
</dbReference>
<dbReference type="GO" id="GO:0050152">
    <property type="term" value="F:omega-amidase activity"/>
    <property type="evidence" value="ECO:0000318"/>
    <property type="project" value="GO_Central"/>
</dbReference>
<dbReference type="GO" id="GO:0006528">
    <property type="term" value="P:asparagine metabolic process"/>
    <property type="evidence" value="ECO:0000318"/>
    <property type="project" value="GO_Central"/>
</dbReference>
<dbReference type="GO" id="GO:1990748">
    <property type="term" value="P:cellular detoxification"/>
    <property type="evidence" value="ECO:0000266"/>
    <property type="project" value="PomBase"/>
</dbReference>
<dbReference type="GO" id="GO:0006541">
    <property type="term" value="P:glutamine metabolic process"/>
    <property type="evidence" value="ECO:0000318"/>
    <property type="project" value="GO_Central"/>
</dbReference>
<dbReference type="GO" id="GO:0006107">
    <property type="term" value="P:oxaloacetate metabolic process"/>
    <property type="evidence" value="ECO:0000318"/>
    <property type="project" value="GO_Central"/>
</dbReference>
<dbReference type="CDD" id="cd07572">
    <property type="entry name" value="nit"/>
    <property type="match status" value="1"/>
</dbReference>
<dbReference type="FunFam" id="3.60.110.10:FF:000002">
    <property type="entry name" value="Nitrilase family member 2"/>
    <property type="match status" value="1"/>
</dbReference>
<dbReference type="Gene3D" id="3.60.110.10">
    <property type="entry name" value="Carbon-nitrogen hydrolase"/>
    <property type="match status" value="1"/>
</dbReference>
<dbReference type="InterPro" id="IPR003010">
    <property type="entry name" value="C-N_Hydrolase"/>
</dbReference>
<dbReference type="InterPro" id="IPR036526">
    <property type="entry name" value="C-N_Hydrolase_sf"/>
</dbReference>
<dbReference type="InterPro" id="IPR045254">
    <property type="entry name" value="Nit1/2_C-N_Hydrolase"/>
</dbReference>
<dbReference type="InterPro" id="IPR001110">
    <property type="entry name" value="UPF0012_CS"/>
</dbReference>
<dbReference type="PANTHER" id="PTHR23088">
    <property type="entry name" value="NITRILASE-RELATED"/>
    <property type="match status" value="1"/>
</dbReference>
<dbReference type="PANTHER" id="PTHR23088:SF30">
    <property type="entry name" value="OMEGA-AMIDASE NIT2"/>
    <property type="match status" value="1"/>
</dbReference>
<dbReference type="Pfam" id="PF00795">
    <property type="entry name" value="CN_hydrolase"/>
    <property type="match status" value="1"/>
</dbReference>
<dbReference type="SUPFAM" id="SSF56317">
    <property type="entry name" value="Carbon-nitrogen hydrolase"/>
    <property type="match status" value="1"/>
</dbReference>
<dbReference type="PROSITE" id="PS50263">
    <property type="entry name" value="CN_HYDROLASE"/>
    <property type="match status" value="1"/>
</dbReference>
<dbReference type="PROSITE" id="PS01227">
    <property type="entry name" value="UPF0012"/>
    <property type="match status" value="1"/>
</dbReference>
<sequence length="322" mass="35680">MNSKFFGLVQKGTRSFFPSLNFCYTRNIMSVSASSLVPKDFRAFRIGLVQLANTKDKSENLQLARLKVLEAAKNGSNVIVLPEIFNSPYGTGYFNQYAEPIEESSPSYQALSSMAKDTKTYLFGGSIPERKDGKLYNTAMVFDPSGKLIAVHRKIHLFDIDIPGGVSFRESDSLSPGDAMTMVDTEYGKFGLGICYDIRFPELAMIAARNGCSVMIYPGAFNLSTGPLHWELLARARAVDNEMFVACCAPARDMNADYHSWGHSTVVDPFGKVIATTDEKPSIVYADIDPSVMSTARNSVPIYTQRRFDVYSEVLPALKKEE</sequence>
<feature type="chain" id="PRO_0000213254" description="Hydrolase C26A3.11">
    <location>
        <begin position="1"/>
        <end position="322"/>
    </location>
</feature>
<feature type="domain" description="CN hydrolase" evidence="1">
    <location>
        <begin position="44"/>
        <end position="290"/>
    </location>
</feature>
<feature type="active site" description="Proton acceptor" evidence="1">
    <location>
        <position position="83"/>
    </location>
</feature>
<feature type="active site" description="Proton donor" evidence="1">
    <location>
        <position position="154"/>
    </location>
</feature>
<feature type="active site" description="Nucleophile" evidence="1">
    <location>
        <position position="195"/>
    </location>
</feature>
<name>YAUB_SCHPO</name>
<accession>Q10166</accession>
<gene>
    <name type="ORF">SPAC26A3.11</name>
</gene>
<organism>
    <name type="scientific">Schizosaccharomyces pombe (strain 972 / ATCC 24843)</name>
    <name type="common">Fission yeast</name>
    <dbReference type="NCBI Taxonomy" id="284812"/>
    <lineage>
        <taxon>Eukaryota</taxon>
        <taxon>Fungi</taxon>
        <taxon>Dikarya</taxon>
        <taxon>Ascomycota</taxon>
        <taxon>Taphrinomycotina</taxon>
        <taxon>Schizosaccharomycetes</taxon>
        <taxon>Schizosaccharomycetales</taxon>
        <taxon>Schizosaccharomycetaceae</taxon>
        <taxon>Schizosaccharomyces</taxon>
    </lineage>
</organism>
<keyword id="KW-0378">Hydrolase</keyword>
<keyword id="KW-1185">Reference proteome</keyword>
<reference key="1">
    <citation type="journal article" date="2002" name="Nature">
        <title>The genome sequence of Schizosaccharomyces pombe.</title>
        <authorList>
            <person name="Wood V."/>
            <person name="Gwilliam R."/>
            <person name="Rajandream M.A."/>
            <person name="Lyne M.H."/>
            <person name="Lyne R."/>
            <person name="Stewart A."/>
            <person name="Sgouros J.G."/>
            <person name="Peat N."/>
            <person name="Hayles J."/>
            <person name="Baker S.G."/>
            <person name="Basham D."/>
            <person name="Bowman S."/>
            <person name="Brooks K."/>
            <person name="Brown D."/>
            <person name="Brown S."/>
            <person name="Chillingworth T."/>
            <person name="Churcher C.M."/>
            <person name="Collins M."/>
            <person name="Connor R."/>
            <person name="Cronin A."/>
            <person name="Davis P."/>
            <person name="Feltwell T."/>
            <person name="Fraser A."/>
            <person name="Gentles S."/>
            <person name="Goble A."/>
            <person name="Hamlin N."/>
            <person name="Harris D.E."/>
            <person name="Hidalgo J."/>
            <person name="Hodgson G."/>
            <person name="Holroyd S."/>
            <person name="Hornsby T."/>
            <person name="Howarth S."/>
            <person name="Huckle E.J."/>
            <person name="Hunt S."/>
            <person name="Jagels K."/>
            <person name="James K.D."/>
            <person name="Jones L."/>
            <person name="Jones M."/>
            <person name="Leather S."/>
            <person name="McDonald S."/>
            <person name="McLean J."/>
            <person name="Mooney P."/>
            <person name="Moule S."/>
            <person name="Mungall K.L."/>
            <person name="Murphy L.D."/>
            <person name="Niblett D."/>
            <person name="Odell C."/>
            <person name="Oliver K."/>
            <person name="O'Neil S."/>
            <person name="Pearson D."/>
            <person name="Quail M.A."/>
            <person name="Rabbinowitsch E."/>
            <person name="Rutherford K.M."/>
            <person name="Rutter S."/>
            <person name="Saunders D."/>
            <person name="Seeger K."/>
            <person name="Sharp S."/>
            <person name="Skelton J."/>
            <person name="Simmonds M.N."/>
            <person name="Squares R."/>
            <person name="Squares S."/>
            <person name="Stevens K."/>
            <person name="Taylor K."/>
            <person name="Taylor R.G."/>
            <person name="Tivey A."/>
            <person name="Walsh S.V."/>
            <person name="Warren T."/>
            <person name="Whitehead S."/>
            <person name="Woodward J.R."/>
            <person name="Volckaert G."/>
            <person name="Aert R."/>
            <person name="Robben J."/>
            <person name="Grymonprez B."/>
            <person name="Weltjens I."/>
            <person name="Vanstreels E."/>
            <person name="Rieger M."/>
            <person name="Schaefer M."/>
            <person name="Mueller-Auer S."/>
            <person name="Gabel C."/>
            <person name="Fuchs M."/>
            <person name="Duesterhoeft A."/>
            <person name="Fritzc C."/>
            <person name="Holzer E."/>
            <person name="Moestl D."/>
            <person name="Hilbert H."/>
            <person name="Borzym K."/>
            <person name="Langer I."/>
            <person name="Beck A."/>
            <person name="Lehrach H."/>
            <person name="Reinhardt R."/>
            <person name="Pohl T.M."/>
            <person name="Eger P."/>
            <person name="Zimmermann W."/>
            <person name="Wedler H."/>
            <person name="Wambutt R."/>
            <person name="Purnelle B."/>
            <person name="Goffeau A."/>
            <person name="Cadieu E."/>
            <person name="Dreano S."/>
            <person name="Gloux S."/>
            <person name="Lelaure V."/>
            <person name="Mottier S."/>
            <person name="Galibert F."/>
            <person name="Aves S.J."/>
            <person name="Xiang Z."/>
            <person name="Hunt C."/>
            <person name="Moore K."/>
            <person name="Hurst S.M."/>
            <person name="Lucas M."/>
            <person name="Rochet M."/>
            <person name="Gaillardin C."/>
            <person name="Tallada V.A."/>
            <person name="Garzon A."/>
            <person name="Thode G."/>
            <person name="Daga R.R."/>
            <person name="Cruzado L."/>
            <person name="Jimenez J."/>
            <person name="Sanchez M."/>
            <person name="del Rey F."/>
            <person name="Benito J."/>
            <person name="Dominguez A."/>
            <person name="Revuelta J.L."/>
            <person name="Moreno S."/>
            <person name="Armstrong J."/>
            <person name="Forsburg S.L."/>
            <person name="Cerutti L."/>
            <person name="Lowe T."/>
            <person name="McCombie W.R."/>
            <person name="Paulsen I."/>
            <person name="Potashkin J."/>
            <person name="Shpakovski G.V."/>
            <person name="Ussery D."/>
            <person name="Barrell B.G."/>
            <person name="Nurse P."/>
        </authorList>
    </citation>
    <scope>NUCLEOTIDE SEQUENCE [LARGE SCALE GENOMIC DNA]</scope>
    <source>
        <strain>972 / ATCC 24843</strain>
    </source>
</reference>
<evidence type="ECO:0000255" key="1">
    <source>
        <dbReference type="PROSITE-ProRule" id="PRU00054"/>
    </source>
</evidence>
<evidence type="ECO:0000305" key="2"/>